<organism>
    <name type="scientific">Lodderomyces elongisporus (strain ATCC 11503 / CBS 2605 / JCM 1781 / NBRC 1676 / NRRL YB-4239)</name>
    <name type="common">Yeast</name>
    <name type="synonym">Saccharomyces elongisporus</name>
    <dbReference type="NCBI Taxonomy" id="379508"/>
    <lineage>
        <taxon>Eukaryota</taxon>
        <taxon>Fungi</taxon>
        <taxon>Dikarya</taxon>
        <taxon>Ascomycota</taxon>
        <taxon>Saccharomycotina</taxon>
        <taxon>Pichiomycetes</taxon>
        <taxon>Debaryomycetaceae</taxon>
        <taxon>Candida/Lodderomyces clade</taxon>
        <taxon>Lodderomyces</taxon>
    </lineage>
</organism>
<accession>A5DTQ6</accession>
<proteinExistence type="inferred from homology"/>
<name>AIM36_LODEL</name>
<sequence>MFRFQRIGQQLVRRETFLHSPRAKLVQPYLFNSQRQYVIVHKDLQKAKKEPRIRYILYMIALSWAAIFFVSSKVDKKKPMQSMTEREFQEYEKQTGIKRRHKLIHSDQNSKYKFYVIPYIYNNEQIEKIEQSLAKSDPNRKNVVIDPAKLVLEEKEDEGAKYSALLNDLDAMKKPYPPGLITAIIKQHINLLINTREGTFDTNYIIKNYPQTTGEAIKFENDIGDISKCLIMHYDMLNELPQQLPEEKVRNIRNVEGYFDSVNKAQTMVSKFDIMDEKFEEIILEDL</sequence>
<gene>
    <name type="primary">AIM36</name>
    <name type="synonym">FMP39</name>
    <name type="ORF">LELG_00742</name>
</gene>
<keyword id="KW-0472">Membrane</keyword>
<keyword id="KW-0496">Mitochondrion</keyword>
<keyword id="KW-1185">Reference proteome</keyword>
<keyword id="KW-0809">Transit peptide</keyword>
<keyword id="KW-0812">Transmembrane</keyword>
<keyword id="KW-1133">Transmembrane helix</keyword>
<feature type="transit peptide" description="Mitochondrion" evidence="2">
    <location>
        <begin position="1"/>
        <end position="14"/>
    </location>
</feature>
<feature type="chain" id="PRO_0000399728" description="Altered inheritance of mitochondria protein 36, mitochondrial">
    <location>
        <begin position="15"/>
        <end position="287"/>
    </location>
</feature>
<feature type="transmembrane region" description="Helical" evidence="2">
    <location>
        <begin position="55"/>
        <end position="72"/>
    </location>
</feature>
<reference key="1">
    <citation type="journal article" date="2009" name="Nature">
        <title>Evolution of pathogenicity and sexual reproduction in eight Candida genomes.</title>
        <authorList>
            <person name="Butler G."/>
            <person name="Rasmussen M.D."/>
            <person name="Lin M.F."/>
            <person name="Santos M.A.S."/>
            <person name="Sakthikumar S."/>
            <person name="Munro C.A."/>
            <person name="Rheinbay E."/>
            <person name="Grabherr M."/>
            <person name="Forche A."/>
            <person name="Reedy J.L."/>
            <person name="Agrafioti I."/>
            <person name="Arnaud M.B."/>
            <person name="Bates S."/>
            <person name="Brown A.J.P."/>
            <person name="Brunke S."/>
            <person name="Costanzo M.C."/>
            <person name="Fitzpatrick D.A."/>
            <person name="de Groot P.W.J."/>
            <person name="Harris D."/>
            <person name="Hoyer L.L."/>
            <person name="Hube B."/>
            <person name="Klis F.M."/>
            <person name="Kodira C."/>
            <person name="Lennard N."/>
            <person name="Logue M.E."/>
            <person name="Martin R."/>
            <person name="Neiman A.M."/>
            <person name="Nikolaou E."/>
            <person name="Quail M.A."/>
            <person name="Quinn J."/>
            <person name="Santos M.C."/>
            <person name="Schmitzberger F.F."/>
            <person name="Sherlock G."/>
            <person name="Shah P."/>
            <person name="Silverstein K.A.T."/>
            <person name="Skrzypek M.S."/>
            <person name="Soll D."/>
            <person name="Staggs R."/>
            <person name="Stansfield I."/>
            <person name="Stumpf M.P.H."/>
            <person name="Sudbery P.E."/>
            <person name="Srikantha T."/>
            <person name="Zeng Q."/>
            <person name="Berman J."/>
            <person name="Berriman M."/>
            <person name="Heitman J."/>
            <person name="Gow N.A.R."/>
            <person name="Lorenz M.C."/>
            <person name="Birren B.W."/>
            <person name="Kellis M."/>
            <person name="Cuomo C.A."/>
        </authorList>
    </citation>
    <scope>NUCLEOTIDE SEQUENCE [LARGE SCALE GENOMIC DNA]</scope>
    <source>
        <strain>ATCC 11503 / BCRC 21390 / CBS 2605 / JCM 1781 / NBRC 1676 / NRRL YB-4239</strain>
    </source>
</reference>
<protein>
    <recommendedName>
        <fullName>Altered inheritance of mitochondria protein 36, mitochondrial</fullName>
    </recommendedName>
    <alternativeName>
        <fullName>Found in mitochondria protein 39</fullName>
    </alternativeName>
</protein>
<dbReference type="EMBL" id="CH981524">
    <property type="protein sequence ID" value="EDK42564.1"/>
    <property type="molecule type" value="Genomic_DNA"/>
</dbReference>
<dbReference type="RefSeq" id="XP_001528222.1">
    <property type="nucleotide sequence ID" value="XM_001528172.1"/>
</dbReference>
<dbReference type="STRING" id="379508.A5DTQ6"/>
<dbReference type="GeneID" id="5235764"/>
<dbReference type="KEGG" id="lel:PVL30_000714"/>
<dbReference type="eggNOG" id="ENOG502SAUM">
    <property type="taxonomic scope" value="Eukaryota"/>
</dbReference>
<dbReference type="HOGENOM" id="CLU_997550_0_0_1"/>
<dbReference type="InParanoid" id="A5DTQ6"/>
<dbReference type="OMA" id="INNVVGY"/>
<dbReference type="OrthoDB" id="4081130at2759"/>
<dbReference type="Proteomes" id="UP000001996">
    <property type="component" value="Unassembled WGS sequence"/>
</dbReference>
<dbReference type="GO" id="GO:0031966">
    <property type="term" value="C:mitochondrial membrane"/>
    <property type="evidence" value="ECO:0007669"/>
    <property type="project" value="UniProtKB-SubCell"/>
</dbReference>
<comment type="subcellular location">
    <subcellularLocation>
        <location evidence="1">Mitochondrion membrane</location>
        <topology evidence="1">Single-pass membrane protein</topology>
    </subcellularLocation>
</comment>
<comment type="similarity">
    <text evidence="3">Belongs to the AIM36 family.</text>
</comment>
<evidence type="ECO:0000250" key="1"/>
<evidence type="ECO:0000255" key="2"/>
<evidence type="ECO:0000305" key="3"/>